<reference key="1">
    <citation type="journal article" date="1999" name="J. Mol. Biol.">
        <title>Comparative sequence analysis of the complete human sarcomeric myosin heavy chain family: implications for functional diversity.</title>
        <authorList>
            <person name="Weiss A."/>
            <person name="Schiaffino S."/>
            <person name="Leinwand L.A."/>
        </authorList>
    </citation>
    <scope>NUCLEOTIDE SEQUENCE [MRNA] (ISOFORM 1)</scope>
    <source>
        <tissue>Skeletal muscle</tissue>
    </source>
</reference>
<reference key="2">
    <citation type="journal article" date="2007" name="BMC Genomics">
        <title>The full-ORF clone resource of the German cDNA consortium.</title>
        <authorList>
            <person name="Bechtel S."/>
            <person name="Rosenfelder H."/>
            <person name="Duda A."/>
            <person name="Schmidt C.P."/>
            <person name="Ernst U."/>
            <person name="Wellenreuther R."/>
            <person name="Mehrle A."/>
            <person name="Schuster C."/>
            <person name="Bahr A."/>
            <person name="Bloecker H."/>
            <person name="Heubner D."/>
            <person name="Hoerlein A."/>
            <person name="Michel G."/>
            <person name="Wedler H."/>
            <person name="Koehrer K."/>
            <person name="Ottenwaelder B."/>
            <person name="Poustka A."/>
            <person name="Wiemann S."/>
            <person name="Schupp I."/>
        </authorList>
    </citation>
    <scope>NUCLEOTIDE SEQUENCE [LARGE SCALE MRNA] (ISOFORM 1)</scope>
    <source>
        <tissue>Skeletal muscle</tissue>
    </source>
</reference>
<reference key="3">
    <citation type="journal article" date="2006" name="Nature">
        <title>DNA sequence of human chromosome 17 and analysis of rearrangement in the human lineage.</title>
        <authorList>
            <person name="Zody M.C."/>
            <person name="Garber M."/>
            <person name="Adams D.J."/>
            <person name="Sharpe T."/>
            <person name="Harrow J."/>
            <person name="Lupski J.R."/>
            <person name="Nicholson C."/>
            <person name="Searle S.M."/>
            <person name="Wilming L."/>
            <person name="Young S.K."/>
            <person name="Abouelleil A."/>
            <person name="Allen N.R."/>
            <person name="Bi W."/>
            <person name="Bloom T."/>
            <person name="Borowsky M.L."/>
            <person name="Bugalter B.E."/>
            <person name="Butler J."/>
            <person name="Chang J.L."/>
            <person name="Chen C.-K."/>
            <person name="Cook A."/>
            <person name="Corum B."/>
            <person name="Cuomo C.A."/>
            <person name="de Jong P.J."/>
            <person name="DeCaprio D."/>
            <person name="Dewar K."/>
            <person name="FitzGerald M."/>
            <person name="Gilbert J."/>
            <person name="Gibson R."/>
            <person name="Gnerre S."/>
            <person name="Goldstein S."/>
            <person name="Grafham D.V."/>
            <person name="Grocock R."/>
            <person name="Hafez N."/>
            <person name="Hagopian D.S."/>
            <person name="Hart E."/>
            <person name="Norman C.H."/>
            <person name="Humphray S."/>
            <person name="Jaffe D.B."/>
            <person name="Jones M."/>
            <person name="Kamal M."/>
            <person name="Khodiyar V.K."/>
            <person name="LaButti K."/>
            <person name="Laird G."/>
            <person name="Lehoczky J."/>
            <person name="Liu X."/>
            <person name="Lokyitsang T."/>
            <person name="Loveland J."/>
            <person name="Lui A."/>
            <person name="Macdonald P."/>
            <person name="Major J.E."/>
            <person name="Matthews L."/>
            <person name="Mauceli E."/>
            <person name="McCarroll S.A."/>
            <person name="Mihalev A.H."/>
            <person name="Mudge J."/>
            <person name="Nguyen C."/>
            <person name="Nicol R."/>
            <person name="O'Leary S.B."/>
            <person name="Osoegawa K."/>
            <person name="Schwartz D.C."/>
            <person name="Shaw-Smith C."/>
            <person name="Stankiewicz P."/>
            <person name="Steward C."/>
            <person name="Swarbreck D."/>
            <person name="Venkataraman V."/>
            <person name="Whittaker C.A."/>
            <person name="Yang X."/>
            <person name="Zimmer A.R."/>
            <person name="Bradley A."/>
            <person name="Hubbard T."/>
            <person name="Birren B.W."/>
            <person name="Rogers J."/>
            <person name="Lander E.S."/>
            <person name="Nusbaum C."/>
        </authorList>
    </citation>
    <scope>NUCLEOTIDE SEQUENCE [LARGE SCALE GENOMIC DNA]</scope>
</reference>
<reference key="4">
    <citation type="journal article" date="2004" name="Genome Res.">
        <title>The status, quality, and expansion of the NIH full-length cDNA project: the Mammalian Gene Collection (MGC).</title>
        <authorList>
            <consortium name="The MGC Project Team"/>
        </authorList>
    </citation>
    <scope>NUCLEOTIDE SEQUENCE [LARGE SCALE MRNA] (ISOFORMS 1 AND 2)</scope>
    <source>
        <tissue>Cerebellum</tissue>
    </source>
</reference>
<reference key="5">
    <citation type="journal article" date="1994" name="Am. J. Physiol.">
        <title>Type IIx myosin heavy chain transcripts are expressed in type IIb fibers of human skeletal muscle.</title>
        <authorList>
            <person name="Smerdu V."/>
            <person name="Karsch-Mizrachi I."/>
            <person name="Campione M."/>
            <person name="Leinwand L."/>
            <person name="Schiaffino S."/>
        </authorList>
    </citation>
    <scope>NUCLEOTIDE SEQUENCE [MRNA] OF 1711-1941 (ISOFORM 1)</scope>
    <source>
        <tissue>Skeletal muscle</tissue>
    </source>
</reference>
<reference key="6">
    <citation type="journal article" date="1995" name="J. Muscle Res. Cell Motil.">
        <title>Characterization of human skeletal muscle fibres according to the myosin heavy chains they express.</title>
        <authorList>
            <person name="Ennion S."/>
            <person name="Sant'ana Pereira J."/>
            <person name="Sargeant T."/>
            <person name="Young A."/>
            <person name="Goldspink G."/>
        </authorList>
    </citation>
    <scope>NUCLEOTIDE SEQUENCE [MRNA] OF 1823-1941 (ISOFORM 1)</scope>
    <source>
        <tissue>Skeletal muscle</tissue>
    </source>
</reference>
<reference key="7">
    <citation type="journal article" date="2007" name="Blood">
        <title>HGAL, a lymphoma prognostic biomarker, interacts with the cytoskeleton and mediates the effects of IL-6 on cell migration.</title>
        <authorList>
            <person name="Lu X."/>
            <person name="Chen J."/>
            <person name="Malumbres R."/>
            <person name="Cubedo Gil E."/>
            <person name="Helfman D.M."/>
            <person name="Lossos I.S."/>
        </authorList>
    </citation>
    <scope>INTERACTION WITH GCSAM</scope>
</reference>
<reference key="8">
    <citation type="journal article" date="2000" name="Proc. Natl. Acad. Sci. U.S.A.">
        <title>Autosomal dominant myopathy: missense mutation (Glu-706 --&gt; Lys) in the myosin heavy chain IIa gene.</title>
        <authorList>
            <person name="Martinsson T."/>
            <person name="Oldfors A."/>
            <person name="Darin N."/>
            <person name="Berg K."/>
            <person name="Tajsharghi H."/>
            <person name="Kyllerman M."/>
            <person name="Wahlstroem J."/>
        </authorList>
    </citation>
    <scope>VARIANT CMYO6 LYS-706</scope>
</reference>
<reference key="9">
    <citation type="journal article" date="2005" name="Eur. J. Hum. Genet.">
        <title>Mutations and sequence variation in the human myosin heavy chain IIa gene (MYH2).</title>
        <authorList>
            <person name="Tajsharghi H."/>
            <person name="Darin N."/>
            <person name="Rekabdar E."/>
            <person name="Kyllerman M."/>
            <person name="Wahlstroem J."/>
            <person name="Martinsson T."/>
            <person name="Oldfors A."/>
        </authorList>
    </citation>
    <scope>VARIANTS ILE-970 AND VAL-1061</scope>
</reference>
<feature type="chain" id="PRO_0000123393" description="Myosin-2">
    <location>
        <begin position="1"/>
        <end position="1941"/>
    </location>
</feature>
<feature type="domain" description="Myosin N-terminal SH3-like" evidence="9">
    <location>
        <begin position="33"/>
        <end position="82"/>
    </location>
</feature>
<feature type="domain" description="Myosin motor" evidence="8">
    <location>
        <begin position="86"/>
        <end position="784"/>
    </location>
</feature>
<feature type="domain" description="IQ" evidence="7">
    <location>
        <begin position="787"/>
        <end position="816"/>
    </location>
</feature>
<feature type="region of interest" description="Actin-binding" evidence="1">
    <location>
        <begin position="661"/>
        <end position="683"/>
    </location>
</feature>
<feature type="region of interest" description="Actin-binding" evidence="1">
    <location>
        <begin position="763"/>
        <end position="777"/>
    </location>
</feature>
<feature type="region of interest" description="Disordered" evidence="10">
    <location>
        <begin position="1128"/>
        <end position="1149"/>
    </location>
</feature>
<feature type="region of interest" description="Disordered" evidence="10">
    <location>
        <begin position="1155"/>
        <end position="1174"/>
    </location>
</feature>
<feature type="coiled-coil region" evidence="6">
    <location>
        <begin position="845"/>
        <end position="1941"/>
    </location>
</feature>
<feature type="compositionally biased region" description="Basic and acidic residues" evidence="10">
    <location>
        <begin position="1130"/>
        <end position="1149"/>
    </location>
</feature>
<feature type="binding site" evidence="6">
    <location>
        <begin position="179"/>
        <end position="186"/>
    </location>
    <ligand>
        <name>ATP</name>
        <dbReference type="ChEBI" id="CHEBI:30616"/>
    </ligand>
</feature>
<feature type="modified residue" description="Phosphothreonine" evidence="5">
    <location>
        <position position="64"/>
    </location>
</feature>
<feature type="modified residue" description="Phosphothreonine" evidence="5">
    <location>
        <position position="69"/>
    </location>
</feature>
<feature type="modified residue" description="N6,N6,N6-trimethyllysine" evidence="6">
    <location>
        <position position="130"/>
    </location>
</feature>
<feature type="modified residue" description="Phosphotyrosine" evidence="5">
    <location>
        <position position="389"/>
    </location>
</feature>
<feature type="modified residue" description="Phosphoserine" evidence="5">
    <location>
        <position position="392"/>
    </location>
</feature>
<feature type="modified residue" description="Phosphothreonine" evidence="5">
    <location>
        <position position="419"/>
    </location>
</feature>
<feature type="modified residue" description="Phosphoserine" evidence="5">
    <location>
        <position position="625"/>
    </location>
</feature>
<feature type="modified residue" description="Pros-methylhistidine" evidence="4">
    <location>
        <position position="759"/>
    </location>
</feature>
<feature type="modified residue" description="Phosphoserine" evidence="5">
    <location>
        <position position="1094"/>
    </location>
</feature>
<feature type="modified residue" description="Phosphoserine" evidence="5">
    <location>
        <position position="1098"/>
    </location>
</feature>
<feature type="modified residue" description="Phosphoserine" evidence="5">
    <location>
        <position position="1164"/>
    </location>
</feature>
<feature type="modified residue" description="Phosphoserine" evidence="5">
    <location>
        <position position="1239"/>
    </location>
</feature>
<feature type="modified residue" description="Phosphothreonine" evidence="5">
    <location>
        <position position="1243"/>
    </location>
</feature>
<feature type="modified residue" description="Phosphoserine" evidence="5">
    <location>
        <position position="1245"/>
    </location>
</feature>
<feature type="modified residue" description="Phosphothreonine" evidence="5">
    <location>
        <position position="1257"/>
    </location>
</feature>
<feature type="modified residue" description="Phosphoserine" evidence="5">
    <location>
        <position position="1263"/>
    </location>
</feature>
<feature type="modified residue" description="Phosphothreonine" evidence="5">
    <location>
        <position position="1288"/>
    </location>
</feature>
<feature type="modified residue" description="Phosphoserine" evidence="5">
    <location>
        <position position="1290"/>
    </location>
</feature>
<feature type="modified residue" description="Phosphoserine" evidence="5">
    <location>
        <position position="1294"/>
    </location>
</feature>
<feature type="modified residue" description="Phosphoserine" evidence="5">
    <location>
        <position position="1305"/>
    </location>
</feature>
<feature type="modified residue" description="Phosphoserine" evidence="5">
    <location>
        <position position="1308"/>
    </location>
</feature>
<feature type="modified residue" description="Phosphothreonine" evidence="5">
    <location>
        <position position="1469"/>
    </location>
</feature>
<feature type="modified residue" description="Phosphoserine" evidence="5">
    <location>
        <position position="1476"/>
    </location>
</feature>
<feature type="modified residue" description="Phosphotyrosine" evidence="5">
    <location>
        <position position="1494"/>
    </location>
</feature>
<feature type="modified residue" description="Phosphoserine" evidence="5">
    <location>
        <position position="1497"/>
    </location>
</feature>
<feature type="modified residue" description="Phosphothreonine" evidence="5">
    <location>
        <position position="1503"/>
    </location>
</feature>
<feature type="modified residue" description="Phosphoserine" evidence="5">
    <location>
        <position position="1516"/>
    </location>
</feature>
<feature type="modified residue" description="Phosphothreonine" evidence="5">
    <location>
        <position position="1519"/>
    </location>
</feature>
<feature type="modified residue" description="Phosphoserine" evidence="5">
    <location>
        <position position="1556"/>
    </location>
</feature>
<feature type="modified residue" description="Phosphoserine" evidence="5">
    <location>
        <position position="1576"/>
    </location>
</feature>
<feature type="modified residue" description="Phosphoserine" evidence="5">
    <location>
        <position position="1602"/>
    </location>
</feature>
<feature type="modified residue" description="Phosphoserine" evidence="5">
    <location>
        <position position="1605"/>
    </location>
</feature>
<feature type="modified residue" description="Phosphoserine" evidence="5">
    <location>
        <position position="1716"/>
    </location>
</feature>
<feature type="modified residue" description="Phosphoserine" evidence="5">
    <location>
        <position position="1728"/>
    </location>
</feature>
<feature type="modified residue" description="Phosphothreonine" evidence="5">
    <location>
        <position position="1732"/>
    </location>
</feature>
<feature type="modified residue" description="Phosphothreonine" evidence="5">
    <location>
        <position position="1738"/>
    </location>
</feature>
<feature type="modified residue" description="Phosphoserine" evidence="5">
    <location>
        <position position="1741"/>
    </location>
</feature>
<feature type="splice variant" id="VSP_056291" description="In isoform 2." evidence="14">
    <location>
        <begin position="659"/>
        <end position="1891"/>
    </location>
</feature>
<feature type="sequence variant" id="VAR_032630" description="In CMYO6; dbSNP:rs121434589." evidence="11">
    <original>E</original>
    <variation>K</variation>
    <location>
        <position position="706"/>
    </location>
</feature>
<feature type="sequence variant" id="VAR_032631" description="In one patient with familial myopathy; uncertain significance; dbSNP:rs143872329." evidence="12">
    <original>V</original>
    <variation>I</variation>
    <location>
        <position position="970"/>
    </location>
</feature>
<feature type="sequence variant" id="VAR_032632" description="In dbSNP:rs142586585." evidence="12">
    <original>L</original>
    <variation>V</variation>
    <location>
        <position position="1061"/>
    </location>
</feature>
<feature type="sequence variant" id="VAR_032633" description="In dbSNP:rs34161789.">
    <original>R</original>
    <variation>Q</variation>
    <location>
        <position position="1927"/>
    </location>
</feature>
<feature type="sequence conflict" description="In Ref. 2; CAD91136." evidence="15" ref="2">
    <original>E</original>
    <variation>G</variation>
    <location>
        <position position="150"/>
    </location>
</feature>
<feature type="sequence conflict" description="In Ref. 6; CAA83687." evidence="15" ref="6">
    <original>K</original>
    <variation>R</variation>
    <location>
        <position position="1844"/>
    </location>
</feature>
<name>MYH2_HUMAN</name>
<keyword id="KW-0009">Actin-binding</keyword>
<keyword id="KW-0025">Alternative splicing</keyword>
<keyword id="KW-0067">ATP-binding</keyword>
<keyword id="KW-0112">Calmodulin-binding</keyword>
<keyword id="KW-0175">Coiled coil</keyword>
<keyword id="KW-0963">Cytoplasm</keyword>
<keyword id="KW-0225">Disease variant</keyword>
<keyword id="KW-0488">Methylation</keyword>
<keyword id="KW-0505">Motor protein</keyword>
<keyword id="KW-0514">Muscle protein</keyword>
<keyword id="KW-0518">Myosin</keyword>
<keyword id="KW-0547">Nucleotide-binding</keyword>
<keyword id="KW-0597">Phosphoprotein</keyword>
<keyword id="KW-1267">Proteomics identification</keyword>
<keyword id="KW-1185">Reference proteome</keyword>
<keyword id="KW-0787">Thick filament</keyword>
<sequence>MSSDSELAVFGEAAPFLRKSERERIEAQNRPFDAKTSVFVAEPKESFVKGTIQSREGGKVTVKTEGGATLTVKDDQVFPMNPPKYDKIEDMAMMTHLHEPAVLYNLKERYAAWMIYTYSGLFCVTVNPYKWLPVYKPEVVTAYRGKKRQEAPPHIFSISDNAYQFMLTDRENQSILITGESGAGKTVNTKRVIQYFATIAVTGEKKKEEITSGKIQGTLEDQIISANPLLEAFGNAKTVRNDNSSRFGKFIRIHFGTTGKLASADIETYLLEKSRVVFQLKAERSYHIFYQITSNKKPELIEMLLITTNPYDYPFVSQGEISVASIDDQEELMATDSAIDILGFTNEEKVSIYKLTGAVMHYGNLKFKQKQREEQAEPDGTEVADKAAYLQSLNSADLLKALCYPRVKVGNEYVTKGQTVEQVSNAVGALAKAVYEKMFLWMVARINQQLDTKQPRQYFIGVLDIAGFEIFDFNSLEQLCINFTNEKLQQFFNHHMFVLEQEEYKKEGIEWTFIDFGMDLAACIELIEKPMGIFSILEEECMFPKATDTSFKNKLYDQHLGKSANFQKPKVVKGKAEAHFALIHYAGVVDYNITGWLEKNKDPLNETVVGLYQKSAMKTLAQLFSGAQTAEGEGAGGGAKKGGKKKGSSFQTVSALFRENLNKLMTNLRSTHPHFVRCIIPNETKTPGAMEHELVLHQLRCNGVLEGIRICRKGFPSRILYADFKQRYKVLNASAIPEGQFIDSKKASEKLLASIDIDHTQYKFGHTKVFFKAGLLGLLEEMRDDKLAQLITRTQARCRGFLARVEYQRMVERREAIFCIQYNIRSFMNVKHWPWMKLFFKIKPLLKSAETEKEMATMKEEFQKIKDELAKSEAKRKELEEKMVTLLKEKNDLQLQVQAEAEGLADAEERCDQLIKTKIQLEAKIKEVTERAEDEEEINAELTAKKRKLEDECSELKKDIDDLELTLAKVEKEKHATENKVKNLTEEMAGLDETIAKLTKEKKALQEAHQQTLDDLQAEEDKVNTLTKAKIKLEQQVDDLEGSLEQEKKLRMDLERAKRKLEGDLKLAQESIMDIENEKQQLDEKLKKKEFEISNLQSKIEDEQALGIQLQKKIKELQARIEELEEEIEAERASRAKAEKQRSDLSRELEEISERLEEAGGATSAQIEMNKKREAEFQKMRRDLEEATLQHEATAATLRKKHADSVAELGEQIDNLQRVKQKLEKEKSEMKMEIDDLASNVETVSKAKGNLEKMCRTLEDQLSELKSKEEEQQRLINDLTAQRGRLQTESGEFSRQLDEKEALVSQLSRGKQAFTQQIEELKRQLEEEIKAKNALAHALQSSRHDCDLLREQYEEEQESKAELQRALSKANTEVAQWRTKYETDAIQRTEELEEAKKKLAQRLQAAEEHVEAVNAKCASLEKTKQRLQNEVEDLMLDVERTNAACAALDKKQRNFDKILAEWKQKCEETHAELEASQKEARSLGTELFKIKNAYEESLDQLETLKRENKNLQQEISDLTEQIAEGGKRIHELEKIKKQVEQEKCELQAALEEAEASLEHEEGKILRIQLELNQVKSEVDRKIAEKDEEIDQLKRNHIRIVESMQSTLDAEIRSRNDAIRLKKKMEGDLNEMEIQLNHANRMAAEALRNYRNTQGILKDTQIHLDDALRSQEDLKEQLAMVERRANLLQAEIEELRATLEQTERSRKIAEQELLDASERVQLLHTQNTSLINTKKKLETDISQMQGEMEDILQEARNAEEKAKKAITDAAMMAEELKKEQDTSAHLERMKKNMEQTVKDLQLRLDEAEQLALKGGKKQIQKLEARVRELEGEVESEQKRNAEAVKGLRKHERRVKELTYQTEEDRKNILRLQDLVDKLQAKVKSYKRQAEEAEEQSNTNLAKFRKLQHELEEAEERADIAESQVNKLRVKSREVHTKVISEE</sequence>
<organism>
    <name type="scientific">Homo sapiens</name>
    <name type="common">Human</name>
    <dbReference type="NCBI Taxonomy" id="9606"/>
    <lineage>
        <taxon>Eukaryota</taxon>
        <taxon>Metazoa</taxon>
        <taxon>Chordata</taxon>
        <taxon>Craniata</taxon>
        <taxon>Vertebrata</taxon>
        <taxon>Euteleostomi</taxon>
        <taxon>Mammalia</taxon>
        <taxon>Eutheria</taxon>
        <taxon>Euarchontoglires</taxon>
        <taxon>Primates</taxon>
        <taxon>Haplorrhini</taxon>
        <taxon>Catarrhini</taxon>
        <taxon>Hominidae</taxon>
        <taxon>Homo</taxon>
    </lineage>
</organism>
<proteinExistence type="evidence at protein level"/>
<comment type="function">
    <text evidence="3">Myosins are actin-based motor molecules with ATPase activity essential for muscle contraction.</text>
</comment>
<comment type="subunit">
    <text evidence="13 15">Muscle myosin is a hexameric protein that consists of 2 heavy chain subunits (MHC), 2 alkali light chain subunits (MLC) and 2 regulatory light chain subunits (MLC-2) (Probable). Interacts with GCSAM (PubMed:17823310).</text>
</comment>
<comment type="subcellular location">
    <subcellularLocation>
        <location evidence="2">Cytoplasm</location>
        <location evidence="2">Myofibril</location>
    </subcellularLocation>
    <text>Thick filaments of the myofibrils.</text>
</comment>
<comment type="alternative products">
    <event type="alternative splicing"/>
    <isoform>
        <id>Q9UKX2-1</id>
        <name>1</name>
        <sequence type="displayed"/>
    </isoform>
    <isoform>
        <id>Q9UKX2-2</id>
        <name>2</name>
        <sequence type="described" ref="VSP_056291"/>
    </isoform>
</comment>
<comment type="domain">
    <text>The rodlike tail sequence is highly repetitive, showing cycles of a 28-residue repeat pattern composed of 4 heptapeptides, characteristic for alpha-helical coiled coils.</text>
</comment>
<comment type="domain">
    <text evidence="15">Limited proteolysis of myosin heavy chain produces 1 light meromyosin (LMM) and 1 heavy meromyosin (HMM). HMM can be further cleaved into 2 globular subfragments (S1) and 1 rod-shaped subfragment (S2).</text>
</comment>
<comment type="disease" evidence="11">
    <disease id="DI-01816">
        <name>Congenital myopathy 6 with ophthalmoplegia</name>
        <acronym>CMYO6</acronym>
        <description>A muscular disorder characterized by mild-to-moderate muscle weakness, ophthalmoplegia, and contractures at birth in some patients. Muscle biopsies from patients show predominance of type 1 fibers and small or absent type 2A fibers. The disease is non-progressive or it progresses very slowly. Inheritance is autosomal dominant or recessive.</description>
        <dbReference type="MIM" id="605637"/>
    </disease>
    <text>The disease is caused by variants affecting the gene represented in this entry.</text>
</comment>
<comment type="similarity">
    <text evidence="15">Belongs to the TRAFAC class myosin-kinesin ATPase superfamily. Myosin family.</text>
</comment>
<comment type="caution">
    <text evidence="15">Represents a conventional myosin. This protein should not be confused with the unconventional myosin-2 (MYO2) found in fungi.</text>
</comment>
<protein>
    <recommendedName>
        <fullName evidence="15">Myosin-2</fullName>
    </recommendedName>
    <alternativeName>
        <fullName evidence="16">Myosin heavy chain 2</fullName>
    </alternativeName>
    <alternativeName>
        <fullName>Myosin heavy chain 2a</fullName>
        <shortName>MyHC-2a</shortName>
    </alternativeName>
    <alternativeName>
        <fullName>Myosin heavy chain IIa</fullName>
        <shortName>MyHC-IIa</shortName>
    </alternativeName>
    <alternativeName>
        <fullName>Myosin heavy chain, skeletal muscle, adult 2</fullName>
    </alternativeName>
</protein>
<evidence type="ECO:0000250" key="1"/>
<evidence type="ECO:0000250" key="2">
    <source>
        <dbReference type="UniProtKB" id="G3UW82"/>
    </source>
</evidence>
<evidence type="ECO:0000250" key="3">
    <source>
        <dbReference type="UniProtKB" id="P12883"/>
    </source>
</evidence>
<evidence type="ECO:0000250" key="4">
    <source>
        <dbReference type="UniProtKB" id="Q28641"/>
    </source>
</evidence>
<evidence type="ECO:0000250" key="5">
    <source>
        <dbReference type="UniProtKB" id="Q29RW1"/>
    </source>
</evidence>
<evidence type="ECO:0000255" key="6"/>
<evidence type="ECO:0000255" key="7">
    <source>
        <dbReference type="PROSITE-ProRule" id="PRU00116"/>
    </source>
</evidence>
<evidence type="ECO:0000255" key="8">
    <source>
        <dbReference type="PROSITE-ProRule" id="PRU00782"/>
    </source>
</evidence>
<evidence type="ECO:0000255" key="9">
    <source>
        <dbReference type="PROSITE-ProRule" id="PRU01190"/>
    </source>
</evidence>
<evidence type="ECO:0000256" key="10">
    <source>
        <dbReference type="SAM" id="MobiDB-lite"/>
    </source>
</evidence>
<evidence type="ECO:0000269" key="11">
    <source>
    </source>
</evidence>
<evidence type="ECO:0000269" key="12">
    <source>
    </source>
</evidence>
<evidence type="ECO:0000269" key="13">
    <source>
    </source>
</evidence>
<evidence type="ECO:0000303" key="14">
    <source>
    </source>
</evidence>
<evidence type="ECO:0000305" key="15"/>
<evidence type="ECO:0000312" key="16">
    <source>
        <dbReference type="HGNC" id="HGNC:7572"/>
    </source>
</evidence>
<accession>Q9UKX2</accession>
<accession>A0AVL4</accession>
<accession>Q14322</accession>
<accession>Q16229</accession>
<accession>Q567P6</accession>
<accession>Q86T56</accession>
<gene>
    <name evidence="16" type="primary">MYH2</name>
    <name type="synonym">MYHSA2</name>
</gene>
<dbReference type="EMBL" id="AF111784">
    <property type="protein sequence ID" value="AAD29950.1"/>
    <property type="molecule type" value="mRNA"/>
</dbReference>
<dbReference type="EMBL" id="BX510904">
    <property type="protein sequence ID" value="CAD91136.1"/>
    <property type="molecule type" value="mRNA"/>
</dbReference>
<dbReference type="EMBL" id="AC005323">
    <property type="status" value="NOT_ANNOTATED_CDS"/>
    <property type="molecule type" value="Genomic_DNA"/>
</dbReference>
<dbReference type="EMBL" id="BC093082">
    <property type="protein sequence ID" value="AAH93082.1"/>
    <property type="molecule type" value="mRNA"/>
</dbReference>
<dbReference type="EMBL" id="BC126409">
    <property type="protein sequence ID" value="AAI26410.1"/>
    <property type="molecule type" value="mRNA"/>
</dbReference>
<dbReference type="EMBL" id="S73840">
    <property type="protein sequence ID" value="AAC13916.1"/>
    <property type="molecule type" value="mRNA"/>
</dbReference>
<dbReference type="EMBL" id="Z32858">
    <property type="protein sequence ID" value="CAA83687.1"/>
    <property type="molecule type" value="mRNA"/>
</dbReference>
<dbReference type="CCDS" id="CCDS11156.1">
    <molecule id="Q9UKX2-1"/>
</dbReference>
<dbReference type="PIR" id="I51912">
    <property type="entry name" value="I51912"/>
</dbReference>
<dbReference type="RefSeq" id="NP_001093582.1">
    <molecule id="Q9UKX2-1"/>
    <property type="nucleotide sequence ID" value="NM_001100112.2"/>
</dbReference>
<dbReference type="RefSeq" id="NP_060004.3">
    <molecule id="Q9UKX2-1"/>
    <property type="nucleotide sequence ID" value="NM_017534.5"/>
</dbReference>
<dbReference type="SMR" id="Q9UKX2"/>
<dbReference type="BioGRID" id="110705">
    <property type="interactions" value="52"/>
</dbReference>
<dbReference type="FunCoup" id="Q9UKX2">
    <property type="interactions" value="324"/>
</dbReference>
<dbReference type="IntAct" id="Q9UKX2">
    <property type="interactions" value="30"/>
</dbReference>
<dbReference type="MINT" id="Q9UKX2"/>
<dbReference type="STRING" id="9606.ENSP00000380367"/>
<dbReference type="BindingDB" id="Q9UKX2"/>
<dbReference type="ChEMBL" id="CHEMBL4295980"/>
<dbReference type="iPTMnet" id="Q9UKX2"/>
<dbReference type="PhosphoSitePlus" id="Q9UKX2"/>
<dbReference type="BioMuta" id="MYH2"/>
<dbReference type="DMDM" id="13431716"/>
<dbReference type="jPOST" id="Q9UKX2"/>
<dbReference type="MassIVE" id="Q9UKX2"/>
<dbReference type="PaxDb" id="9606-ENSP00000245503"/>
<dbReference type="PeptideAtlas" id="Q9UKX2"/>
<dbReference type="ProteomicsDB" id="62563"/>
<dbReference type="ProteomicsDB" id="84903">
    <molecule id="Q9UKX2-1"/>
</dbReference>
<dbReference type="Pumba" id="Q9UKX2"/>
<dbReference type="ABCD" id="Q9UKX2">
    <property type="antibodies" value="2 sequenced antibodies"/>
</dbReference>
<dbReference type="Antibodypedia" id="4384">
    <property type="antibodies" value="141 antibodies from 25 providers"/>
</dbReference>
<dbReference type="DNASU" id="4620"/>
<dbReference type="Ensembl" id="ENST00000245503.10">
    <molecule id="Q9UKX2-1"/>
    <property type="protein sequence ID" value="ENSP00000245503.5"/>
    <property type="gene ID" value="ENSG00000125414.19"/>
</dbReference>
<dbReference type="Ensembl" id="ENST00000397183.6">
    <molecule id="Q9UKX2-1"/>
    <property type="protein sequence ID" value="ENSP00000380367.2"/>
    <property type="gene ID" value="ENSG00000125414.19"/>
</dbReference>
<dbReference type="Ensembl" id="ENST00000532183.6">
    <molecule id="Q9UKX2-2"/>
    <property type="protein sequence ID" value="ENSP00000433944.1"/>
    <property type="gene ID" value="ENSG00000125414.19"/>
</dbReference>
<dbReference type="Ensembl" id="ENST00000622564.4">
    <molecule id="Q9UKX2-2"/>
    <property type="protein sequence ID" value="ENSP00000482463.1"/>
    <property type="gene ID" value="ENSG00000125414.19"/>
</dbReference>
<dbReference type="GeneID" id="4620"/>
<dbReference type="KEGG" id="hsa:4620"/>
<dbReference type="MANE-Select" id="ENST00000245503.10">
    <property type="protein sequence ID" value="ENSP00000245503.5"/>
    <property type="RefSeq nucleotide sequence ID" value="NM_017534.6"/>
    <property type="RefSeq protein sequence ID" value="NP_060004.3"/>
</dbReference>
<dbReference type="UCSC" id="uc002gmp.5">
    <molecule id="Q9UKX2-1"/>
    <property type="organism name" value="human"/>
</dbReference>
<dbReference type="AGR" id="HGNC:7572"/>
<dbReference type="CTD" id="4620"/>
<dbReference type="DisGeNET" id="4620"/>
<dbReference type="GeneCards" id="MYH2"/>
<dbReference type="HGNC" id="HGNC:7572">
    <property type="gene designation" value="MYH2"/>
</dbReference>
<dbReference type="HPA" id="ENSG00000125414">
    <property type="expression patterns" value="Group enriched (skeletal muscle, tongue)"/>
</dbReference>
<dbReference type="MalaCards" id="MYH2"/>
<dbReference type="MIM" id="160740">
    <property type="type" value="gene"/>
</dbReference>
<dbReference type="MIM" id="605637">
    <property type="type" value="phenotype"/>
</dbReference>
<dbReference type="neXtProt" id="NX_Q9UKX2"/>
<dbReference type="OpenTargets" id="ENSG00000125414"/>
<dbReference type="Orphanet" id="363677">
    <property type="disease" value="Childhood-onset autosomal recessive myopathy with external ophthalmoplegia"/>
</dbReference>
<dbReference type="Orphanet" id="79091">
    <property type="disease" value="Hereditary inclusion body myopathy-joint contractures-ophthalmoplegia syndrome"/>
</dbReference>
<dbReference type="PharmGKB" id="PA31369"/>
<dbReference type="VEuPathDB" id="HostDB:ENSG00000125414"/>
<dbReference type="eggNOG" id="KOG0161">
    <property type="taxonomic scope" value="Eukaryota"/>
</dbReference>
<dbReference type="GeneTree" id="ENSGT00940000161336"/>
<dbReference type="HOGENOM" id="CLU_000192_7_5_1"/>
<dbReference type="InParanoid" id="Q9UKX2"/>
<dbReference type="OMA" id="MKAYKRH"/>
<dbReference type="OrthoDB" id="312459at2759"/>
<dbReference type="PAN-GO" id="Q9UKX2">
    <property type="GO annotations" value="6 GO annotations based on evolutionary models"/>
</dbReference>
<dbReference type="PhylomeDB" id="Q9UKX2"/>
<dbReference type="TreeFam" id="TF314375"/>
<dbReference type="PathwayCommons" id="Q9UKX2"/>
<dbReference type="Reactome" id="R-HSA-2029482">
    <property type="pathway name" value="Regulation of actin dynamics for phagocytic cup formation"/>
</dbReference>
<dbReference type="Reactome" id="R-HSA-9664422">
    <property type="pathway name" value="FCGR3A-mediated phagocytosis"/>
</dbReference>
<dbReference type="SignaLink" id="Q9UKX2"/>
<dbReference type="SIGNOR" id="Q9UKX2"/>
<dbReference type="BioGRID-ORCS" id="4620">
    <property type="hits" value="13 hits in 1146 CRISPR screens"/>
</dbReference>
<dbReference type="ChiTaRS" id="MYH2">
    <property type="organism name" value="human"/>
</dbReference>
<dbReference type="GeneWiki" id="MYH2"/>
<dbReference type="GenomeRNAi" id="4620"/>
<dbReference type="Pharos" id="Q9UKX2">
    <property type="development level" value="Tbio"/>
</dbReference>
<dbReference type="PRO" id="PR:Q9UKX2"/>
<dbReference type="Proteomes" id="UP000005640">
    <property type="component" value="Chromosome 17"/>
</dbReference>
<dbReference type="RNAct" id="Q9UKX2">
    <property type="molecule type" value="protein"/>
</dbReference>
<dbReference type="Bgee" id="ENSG00000125414">
    <property type="expression patterns" value="Expressed in skeletal muscle tissue of rectus abdominis and 105 other cell types or tissues"/>
</dbReference>
<dbReference type="ExpressionAtlas" id="Q9UKX2">
    <property type="expression patterns" value="baseline and differential"/>
</dbReference>
<dbReference type="GO" id="GO:0005911">
    <property type="term" value="C:cell-cell junction"/>
    <property type="evidence" value="ECO:0000315"/>
    <property type="project" value="ARUK-UCL"/>
</dbReference>
<dbReference type="GO" id="GO:0005737">
    <property type="term" value="C:cytoplasm"/>
    <property type="evidence" value="ECO:0000318"/>
    <property type="project" value="GO_Central"/>
</dbReference>
<dbReference type="GO" id="GO:0005829">
    <property type="term" value="C:cytosol"/>
    <property type="evidence" value="ECO:0000304"/>
    <property type="project" value="Reactome"/>
</dbReference>
<dbReference type="GO" id="GO:0005859">
    <property type="term" value="C:muscle myosin complex"/>
    <property type="evidence" value="ECO:0000304"/>
    <property type="project" value="UniProtKB"/>
</dbReference>
<dbReference type="GO" id="GO:0030016">
    <property type="term" value="C:myofibril"/>
    <property type="evidence" value="ECO:0000314"/>
    <property type="project" value="BHF-UCL"/>
</dbReference>
<dbReference type="GO" id="GO:0032982">
    <property type="term" value="C:myosin filament"/>
    <property type="evidence" value="ECO:0000318"/>
    <property type="project" value="GO_Central"/>
</dbReference>
<dbReference type="GO" id="GO:0016460">
    <property type="term" value="C:myosin II complex"/>
    <property type="evidence" value="ECO:0000318"/>
    <property type="project" value="GO_Central"/>
</dbReference>
<dbReference type="GO" id="GO:0032991">
    <property type="term" value="C:protein-containing complex"/>
    <property type="evidence" value="ECO:0000314"/>
    <property type="project" value="LIFEdb"/>
</dbReference>
<dbReference type="GO" id="GO:0030017">
    <property type="term" value="C:sarcomere"/>
    <property type="evidence" value="ECO:0000303"/>
    <property type="project" value="BHF-UCL"/>
</dbReference>
<dbReference type="GO" id="GO:0051015">
    <property type="term" value="F:actin filament binding"/>
    <property type="evidence" value="ECO:0000318"/>
    <property type="project" value="GO_Central"/>
</dbReference>
<dbReference type="GO" id="GO:0005524">
    <property type="term" value="F:ATP binding"/>
    <property type="evidence" value="ECO:0007669"/>
    <property type="project" value="UniProtKB-KW"/>
</dbReference>
<dbReference type="GO" id="GO:0005516">
    <property type="term" value="F:calmodulin binding"/>
    <property type="evidence" value="ECO:0007669"/>
    <property type="project" value="UniProtKB-KW"/>
</dbReference>
<dbReference type="GO" id="GO:0000146">
    <property type="term" value="F:microfilament motor activity"/>
    <property type="evidence" value="ECO:0000318"/>
    <property type="project" value="GO_Central"/>
</dbReference>
<dbReference type="GO" id="GO:0006936">
    <property type="term" value="P:muscle contraction"/>
    <property type="evidence" value="ECO:0000314"/>
    <property type="project" value="BHF-UCL"/>
</dbReference>
<dbReference type="GO" id="GO:0030049">
    <property type="term" value="P:muscle filament sliding"/>
    <property type="evidence" value="ECO:0000303"/>
    <property type="project" value="BHF-UCL"/>
</dbReference>
<dbReference type="CDD" id="cd14912">
    <property type="entry name" value="MYSc_Myh2_mammals"/>
    <property type="match status" value="1"/>
</dbReference>
<dbReference type="FunFam" id="1.10.10.820:FF:000001">
    <property type="entry name" value="Myosin heavy chain"/>
    <property type="match status" value="1"/>
</dbReference>
<dbReference type="FunFam" id="1.20.5.340:FF:000002">
    <property type="entry name" value="Myosin heavy chain"/>
    <property type="match status" value="1"/>
</dbReference>
<dbReference type="FunFam" id="1.20.5.340:FF:000003">
    <property type="entry name" value="Myosin heavy chain"/>
    <property type="match status" value="1"/>
</dbReference>
<dbReference type="FunFam" id="1.20.5.340:FF:000004">
    <property type="entry name" value="Myosin heavy chain"/>
    <property type="match status" value="1"/>
</dbReference>
<dbReference type="FunFam" id="1.20.5.340:FF:000006">
    <property type="entry name" value="Myosin heavy chain"/>
    <property type="match status" value="1"/>
</dbReference>
<dbReference type="FunFam" id="1.20.5.340:FF:000013">
    <property type="entry name" value="Myosin heavy chain"/>
    <property type="match status" value="1"/>
</dbReference>
<dbReference type="FunFam" id="1.20.5.370:FF:000001">
    <property type="entry name" value="Myosin heavy chain"/>
    <property type="match status" value="1"/>
</dbReference>
<dbReference type="FunFam" id="1.20.5.370:FF:000002">
    <property type="entry name" value="Myosin heavy chain"/>
    <property type="match status" value="1"/>
</dbReference>
<dbReference type="FunFam" id="1.20.5.370:FF:000003">
    <property type="entry name" value="Myosin heavy chain"/>
    <property type="match status" value="1"/>
</dbReference>
<dbReference type="FunFam" id="1.20.5.370:FF:000007">
    <property type="entry name" value="Myosin heavy chain"/>
    <property type="match status" value="1"/>
</dbReference>
<dbReference type="FunFam" id="1.20.5.370:FF:000008">
    <property type="entry name" value="Myosin heavy chain"/>
    <property type="match status" value="1"/>
</dbReference>
<dbReference type="FunFam" id="1.20.5.4820:FF:000001">
    <property type="entry name" value="Myosin heavy chain"/>
    <property type="match status" value="1"/>
</dbReference>
<dbReference type="FunFam" id="1.20.58.530:FF:000001">
    <property type="entry name" value="Myosin heavy chain"/>
    <property type="match status" value="1"/>
</dbReference>
<dbReference type="FunFam" id="2.30.30.360:FF:000001">
    <property type="entry name" value="Myosin heavy chain"/>
    <property type="match status" value="1"/>
</dbReference>
<dbReference type="FunFam" id="3.40.850.10:FF:000024">
    <property type="entry name" value="Myosin heavy chain, isoform J"/>
    <property type="match status" value="1"/>
</dbReference>
<dbReference type="FunFam" id="1.20.120.720:FF:000001">
    <property type="entry name" value="Myosin heavy chain, muscle"/>
    <property type="match status" value="1"/>
</dbReference>
<dbReference type="Gene3D" id="1.10.10.820">
    <property type="match status" value="1"/>
</dbReference>
<dbReference type="Gene3D" id="1.20.5.340">
    <property type="match status" value="5"/>
</dbReference>
<dbReference type="Gene3D" id="1.20.5.370">
    <property type="match status" value="4"/>
</dbReference>
<dbReference type="Gene3D" id="1.20.5.4820">
    <property type="match status" value="1"/>
</dbReference>
<dbReference type="Gene3D" id="1.20.58.530">
    <property type="match status" value="1"/>
</dbReference>
<dbReference type="Gene3D" id="6.10.250.2420">
    <property type="match status" value="1"/>
</dbReference>
<dbReference type="Gene3D" id="3.40.850.10">
    <property type="entry name" value="Kinesin motor domain"/>
    <property type="match status" value="1"/>
</dbReference>
<dbReference type="Gene3D" id="2.30.30.360">
    <property type="entry name" value="Myosin S1 fragment, N-terminal"/>
    <property type="match status" value="1"/>
</dbReference>
<dbReference type="Gene3D" id="1.20.120.720">
    <property type="entry name" value="Myosin VI head, motor domain, U50 subdomain"/>
    <property type="match status" value="1"/>
</dbReference>
<dbReference type="InterPro" id="IPR000048">
    <property type="entry name" value="IQ_motif_EF-hand-BS"/>
</dbReference>
<dbReference type="InterPro" id="IPR036961">
    <property type="entry name" value="Kinesin_motor_dom_sf"/>
</dbReference>
<dbReference type="InterPro" id="IPR001609">
    <property type="entry name" value="Myosin_head_motor_dom-like"/>
</dbReference>
<dbReference type="InterPro" id="IPR004009">
    <property type="entry name" value="Myosin_N"/>
</dbReference>
<dbReference type="InterPro" id="IPR008989">
    <property type="entry name" value="Myosin_S1_N"/>
</dbReference>
<dbReference type="InterPro" id="IPR002928">
    <property type="entry name" value="Myosin_tail"/>
</dbReference>
<dbReference type="InterPro" id="IPR027417">
    <property type="entry name" value="P-loop_NTPase"/>
</dbReference>
<dbReference type="InterPro" id="IPR014751">
    <property type="entry name" value="XRCC4-like_C"/>
</dbReference>
<dbReference type="PANTHER" id="PTHR45615">
    <property type="entry name" value="MYOSIN HEAVY CHAIN, NON-MUSCLE"/>
    <property type="match status" value="1"/>
</dbReference>
<dbReference type="PANTHER" id="PTHR45615:SF39">
    <property type="entry name" value="MYOSIN-2"/>
    <property type="match status" value="1"/>
</dbReference>
<dbReference type="Pfam" id="PF00063">
    <property type="entry name" value="Myosin_head"/>
    <property type="match status" value="1"/>
</dbReference>
<dbReference type="Pfam" id="PF02736">
    <property type="entry name" value="Myosin_N"/>
    <property type="match status" value="1"/>
</dbReference>
<dbReference type="Pfam" id="PF01576">
    <property type="entry name" value="Myosin_tail_1"/>
    <property type="match status" value="1"/>
</dbReference>
<dbReference type="PRINTS" id="PR00193">
    <property type="entry name" value="MYOSINHEAVY"/>
</dbReference>
<dbReference type="SMART" id="SM00015">
    <property type="entry name" value="IQ"/>
    <property type="match status" value="1"/>
</dbReference>
<dbReference type="SMART" id="SM00242">
    <property type="entry name" value="MYSc"/>
    <property type="match status" value="1"/>
</dbReference>
<dbReference type="SUPFAM" id="SSF90257">
    <property type="entry name" value="Myosin rod fragments"/>
    <property type="match status" value="5"/>
</dbReference>
<dbReference type="SUPFAM" id="SSF52540">
    <property type="entry name" value="P-loop containing nucleoside triphosphate hydrolases"/>
    <property type="match status" value="1"/>
</dbReference>
<dbReference type="SUPFAM" id="SSF57997">
    <property type="entry name" value="Tropomyosin"/>
    <property type="match status" value="1"/>
</dbReference>
<dbReference type="PROSITE" id="PS50096">
    <property type="entry name" value="IQ"/>
    <property type="match status" value="1"/>
</dbReference>
<dbReference type="PROSITE" id="PS51456">
    <property type="entry name" value="MYOSIN_MOTOR"/>
    <property type="match status" value="1"/>
</dbReference>
<dbReference type="PROSITE" id="PS51844">
    <property type="entry name" value="SH3_LIKE"/>
    <property type="match status" value="1"/>
</dbReference>